<evidence type="ECO:0000250" key="1"/>
<evidence type="ECO:0000255" key="2"/>
<evidence type="ECO:0000255" key="3">
    <source>
        <dbReference type="PROSITE-ProRule" id="PRU00258"/>
    </source>
</evidence>
<evidence type="ECO:0000305" key="4"/>
<protein>
    <recommendedName>
        <fullName>Putative acyl carrier protein, mitochondrial</fullName>
        <shortName>ACP</shortName>
    </recommendedName>
</protein>
<gene>
    <name type="ORF">SPAC4H3.09</name>
</gene>
<dbReference type="EMBL" id="CU329670">
    <property type="protein sequence ID" value="CAA93348.1"/>
    <property type="molecule type" value="Genomic_DNA"/>
</dbReference>
<dbReference type="PIR" id="T38889">
    <property type="entry name" value="T38889"/>
</dbReference>
<dbReference type="RefSeq" id="NP_594345.1">
    <property type="nucleotide sequence ID" value="NM_001019766.2"/>
</dbReference>
<dbReference type="SMR" id="Q10217"/>
<dbReference type="BioGRID" id="279978">
    <property type="interactions" value="1"/>
</dbReference>
<dbReference type="FunCoup" id="Q10217">
    <property type="interactions" value="430"/>
</dbReference>
<dbReference type="STRING" id="284812.Q10217"/>
<dbReference type="iPTMnet" id="Q10217"/>
<dbReference type="PaxDb" id="4896-SPAC4H3.09.1"/>
<dbReference type="EnsemblFungi" id="SPAC4H3.09.1">
    <property type="protein sequence ID" value="SPAC4H3.09.1:pep"/>
    <property type="gene ID" value="SPAC4H3.09"/>
</dbReference>
<dbReference type="KEGG" id="spo:2543562"/>
<dbReference type="PomBase" id="SPAC4H3.09"/>
<dbReference type="VEuPathDB" id="FungiDB:SPAC4H3.09"/>
<dbReference type="eggNOG" id="KOG1748">
    <property type="taxonomic scope" value="Eukaryota"/>
</dbReference>
<dbReference type="HOGENOM" id="CLU_108696_0_3_1"/>
<dbReference type="InParanoid" id="Q10217"/>
<dbReference type="OMA" id="ELMMMRE"/>
<dbReference type="PhylomeDB" id="Q10217"/>
<dbReference type="Reactome" id="R-SPO-77289">
    <property type="pathway name" value="Mitochondrial Fatty Acid Beta-Oxidation"/>
</dbReference>
<dbReference type="Reactome" id="R-SPO-9857492">
    <property type="pathway name" value="Protein lipoylation"/>
</dbReference>
<dbReference type="UniPathway" id="UPA00094"/>
<dbReference type="PRO" id="PR:Q10217"/>
<dbReference type="Proteomes" id="UP000002485">
    <property type="component" value="Chromosome I"/>
</dbReference>
<dbReference type="GO" id="GO:0099128">
    <property type="term" value="C:mitochondrial [2Fe-2S] assembly complex"/>
    <property type="evidence" value="ECO:0000304"/>
    <property type="project" value="PomBase"/>
</dbReference>
<dbReference type="GO" id="GO:0005759">
    <property type="term" value="C:mitochondrial matrix"/>
    <property type="evidence" value="ECO:0000250"/>
    <property type="project" value="PomBase"/>
</dbReference>
<dbReference type="GO" id="GO:0005739">
    <property type="term" value="C:mitochondrion"/>
    <property type="evidence" value="ECO:0007005"/>
    <property type="project" value="PomBase"/>
</dbReference>
<dbReference type="GO" id="GO:0000035">
    <property type="term" value="F:acyl binding"/>
    <property type="evidence" value="ECO:0000318"/>
    <property type="project" value="GO_Central"/>
</dbReference>
<dbReference type="GO" id="GO:0000036">
    <property type="term" value="F:acyl carrier activity"/>
    <property type="evidence" value="ECO:0000318"/>
    <property type="project" value="GO_Central"/>
</dbReference>
<dbReference type="GO" id="GO:0044571">
    <property type="term" value="P:[2Fe-2S] cluster assembly"/>
    <property type="evidence" value="ECO:0000266"/>
    <property type="project" value="PomBase"/>
</dbReference>
<dbReference type="GO" id="GO:0006633">
    <property type="term" value="P:fatty acid biosynthetic process"/>
    <property type="evidence" value="ECO:0000250"/>
    <property type="project" value="PomBase"/>
</dbReference>
<dbReference type="FunFam" id="1.10.1200.10:FF:000003">
    <property type="entry name" value="Acyl carrier protein"/>
    <property type="match status" value="1"/>
</dbReference>
<dbReference type="Gene3D" id="1.10.1200.10">
    <property type="entry name" value="ACP-like"/>
    <property type="match status" value="1"/>
</dbReference>
<dbReference type="HAMAP" id="MF_01217">
    <property type="entry name" value="Acyl_carrier"/>
    <property type="match status" value="1"/>
</dbReference>
<dbReference type="InterPro" id="IPR003231">
    <property type="entry name" value="ACP"/>
</dbReference>
<dbReference type="InterPro" id="IPR036736">
    <property type="entry name" value="ACP-like_sf"/>
</dbReference>
<dbReference type="InterPro" id="IPR009081">
    <property type="entry name" value="PP-bd_ACP"/>
</dbReference>
<dbReference type="InterPro" id="IPR006162">
    <property type="entry name" value="Ppantetheine_attach_site"/>
</dbReference>
<dbReference type="NCBIfam" id="TIGR00517">
    <property type="entry name" value="acyl_carrier"/>
    <property type="match status" value="1"/>
</dbReference>
<dbReference type="NCBIfam" id="NF002148">
    <property type="entry name" value="PRK00982.1-2"/>
    <property type="match status" value="1"/>
</dbReference>
<dbReference type="PANTHER" id="PTHR20863">
    <property type="entry name" value="ACYL CARRIER PROTEIN"/>
    <property type="match status" value="1"/>
</dbReference>
<dbReference type="PANTHER" id="PTHR20863:SF28">
    <property type="entry name" value="ACYL CARRIER PROTEIN, MITOCHONDRIAL"/>
    <property type="match status" value="1"/>
</dbReference>
<dbReference type="Pfam" id="PF00550">
    <property type="entry name" value="PP-binding"/>
    <property type="match status" value="1"/>
</dbReference>
<dbReference type="SUPFAM" id="SSF47336">
    <property type="entry name" value="ACP-like"/>
    <property type="match status" value="1"/>
</dbReference>
<dbReference type="PROSITE" id="PS50075">
    <property type="entry name" value="CARRIER"/>
    <property type="match status" value="1"/>
</dbReference>
<dbReference type="PROSITE" id="PS00012">
    <property type="entry name" value="PHOSPHOPANTETHEINE"/>
    <property type="match status" value="1"/>
</dbReference>
<keyword id="KW-0249">Electron transport</keyword>
<keyword id="KW-0275">Fatty acid biosynthesis</keyword>
<keyword id="KW-0276">Fatty acid metabolism</keyword>
<keyword id="KW-0444">Lipid biosynthesis</keyword>
<keyword id="KW-0443">Lipid metabolism</keyword>
<keyword id="KW-0496">Mitochondrion</keyword>
<keyword id="KW-0596">Phosphopantetheine</keyword>
<keyword id="KW-0597">Phosphoprotein</keyword>
<keyword id="KW-1185">Reference proteome</keyword>
<keyword id="KW-0809">Transit peptide</keyword>
<keyword id="KW-0813">Transport</keyword>
<reference key="1">
    <citation type="journal article" date="2002" name="Nature">
        <title>The genome sequence of Schizosaccharomyces pombe.</title>
        <authorList>
            <person name="Wood V."/>
            <person name="Gwilliam R."/>
            <person name="Rajandream M.A."/>
            <person name="Lyne M.H."/>
            <person name="Lyne R."/>
            <person name="Stewart A."/>
            <person name="Sgouros J.G."/>
            <person name="Peat N."/>
            <person name="Hayles J."/>
            <person name="Baker S.G."/>
            <person name="Basham D."/>
            <person name="Bowman S."/>
            <person name="Brooks K."/>
            <person name="Brown D."/>
            <person name="Brown S."/>
            <person name="Chillingworth T."/>
            <person name="Churcher C.M."/>
            <person name="Collins M."/>
            <person name="Connor R."/>
            <person name="Cronin A."/>
            <person name="Davis P."/>
            <person name="Feltwell T."/>
            <person name="Fraser A."/>
            <person name="Gentles S."/>
            <person name="Goble A."/>
            <person name="Hamlin N."/>
            <person name="Harris D.E."/>
            <person name="Hidalgo J."/>
            <person name="Hodgson G."/>
            <person name="Holroyd S."/>
            <person name="Hornsby T."/>
            <person name="Howarth S."/>
            <person name="Huckle E.J."/>
            <person name="Hunt S."/>
            <person name="Jagels K."/>
            <person name="James K.D."/>
            <person name="Jones L."/>
            <person name="Jones M."/>
            <person name="Leather S."/>
            <person name="McDonald S."/>
            <person name="McLean J."/>
            <person name="Mooney P."/>
            <person name="Moule S."/>
            <person name="Mungall K.L."/>
            <person name="Murphy L.D."/>
            <person name="Niblett D."/>
            <person name="Odell C."/>
            <person name="Oliver K."/>
            <person name="O'Neil S."/>
            <person name="Pearson D."/>
            <person name="Quail M.A."/>
            <person name="Rabbinowitsch E."/>
            <person name="Rutherford K.M."/>
            <person name="Rutter S."/>
            <person name="Saunders D."/>
            <person name="Seeger K."/>
            <person name="Sharp S."/>
            <person name="Skelton J."/>
            <person name="Simmonds M.N."/>
            <person name="Squares R."/>
            <person name="Squares S."/>
            <person name="Stevens K."/>
            <person name="Taylor K."/>
            <person name="Taylor R.G."/>
            <person name="Tivey A."/>
            <person name="Walsh S.V."/>
            <person name="Warren T."/>
            <person name="Whitehead S."/>
            <person name="Woodward J.R."/>
            <person name="Volckaert G."/>
            <person name="Aert R."/>
            <person name="Robben J."/>
            <person name="Grymonprez B."/>
            <person name="Weltjens I."/>
            <person name="Vanstreels E."/>
            <person name="Rieger M."/>
            <person name="Schaefer M."/>
            <person name="Mueller-Auer S."/>
            <person name="Gabel C."/>
            <person name="Fuchs M."/>
            <person name="Duesterhoeft A."/>
            <person name="Fritzc C."/>
            <person name="Holzer E."/>
            <person name="Moestl D."/>
            <person name="Hilbert H."/>
            <person name="Borzym K."/>
            <person name="Langer I."/>
            <person name="Beck A."/>
            <person name="Lehrach H."/>
            <person name="Reinhardt R."/>
            <person name="Pohl T.M."/>
            <person name="Eger P."/>
            <person name="Zimmermann W."/>
            <person name="Wedler H."/>
            <person name="Wambutt R."/>
            <person name="Purnelle B."/>
            <person name="Goffeau A."/>
            <person name="Cadieu E."/>
            <person name="Dreano S."/>
            <person name="Gloux S."/>
            <person name="Lelaure V."/>
            <person name="Mottier S."/>
            <person name="Galibert F."/>
            <person name="Aves S.J."/>
            <person name="Xiang Z."/>
            <person name="Hunt C."/>
            <person name="Moore K."/>
            <person name="Hurst S.M."/>
            <person name="Lucas M."/>
            <person name="Rochet M."/>
            <person name="Gaillardin C."/>
            <person name="Tallada V.A."/>
            <person name="Garzon A."/>
            <person name="Thode G."/>
            <person name="Daga R.R."/>
            <person name="Cruzado L."/>
            <person name="Jimenez J."/>
            <person name="Sanchez M."/>
            <person name="del Rey F."/>
            <person name="Benito J."/>
            <person name="Dominguez A."/>
            <person name="Revuelta J.L."/>
            <person name="Moreno S."/>
            <person name="Armstrong J."/>
            <person name="Forsburg S.L."/>
            <person name="Cerutti L."/>
            <person name="Lowe T."/>
            <person name="McCombie W.R."/>
            <person name="Paulsen I."/>
            <person name="Potashkin J."/>
            <person name="Shpakovski G.V."/>
            <person name="Ussery D."/>
            <person name="Barrell B.G."/>
            <person name="Nurse P."/>
        </authorList>
    </citation>
    <scope>NUCLEOTIDE SEQUENCE [LARGE SCALE GENOMIC DNA]</scope>
    <source>
        <strain>972 / ATCC 24843</strain>
    </source>
</reference>
<feature type="transit peptide" description="Mitochondrion" evidence="2">
    <location>
        <begin position="1"/>
        <end position="28"/>
    </location>
</feature>
<feature type="chain" id="PRO_0000000565" description="Putative acyl carrier protein, mitochondrial">
    <location>
        <begin position="29"/>
        <end position="112"/>
    </location>
</feature>
<feature type="domain" description="Carrier" evidence="3">
    <location>
        <begin position="33"/>
        <end position="109"/>
    </location>
</feature>
<feature type="modified residue" description="O-(pantetheine 4'-phosphoryl)serine" evidence="3">
    <location>
        <position position="69"/>
    </location>
</feature>
<name>ACPM_SCHPO</name>
<sequence length="112" mass="12519">MLSRFSSQLRFISAVRPVIPKFQPLRFYSVARPDAEKRILKVVSSFDKIQDPKKVTPTSTFANDLGLDSLDAVEVVMAIEEEFSIQIPDKDADEITSVGDAISYITKNPEAK</sequence>
<organism>
    <name type="scientific">Schizosaccharomyces pombe (strain 972 / ATCC 24843)</name>
    <name type="common">Fission yeast</name>
    <dbReference type="NCBI Taxonomy" id="284812"/>
    <lineage>
        <taxon>Eukaryota</taxon>
        <taxon>Fungi</taxon>
        <taxon>Dikarya</taxon>
        <taxon>Ascomycota</taxon>
        <taxon>Taphrinomycotina</taxon>
        <taxon>Schizosaccharomycetes</taxon>
        <taxon>Schizosaccharomycetales</taxon>
        <taxon>Schizosaccharomycetaceae</taxon>
        <taxon>Schizosaccharomyces</taxon>
    </lineage>
</organism>
<comment type="function">
    <text evidence="1">Carrier of the growing fatty acid chain in fatty acid biosynthesis (By similarity). May be involved in the synthesis of very-long-chain fatty acids.</text>
</comment>
<comment type="pathway">
    <text>Lipid metabolism; fatty acid biosynthesis.</text>
</comment>
<comment type="subcellular location">
    <subcellularLocation>
        <location evidence="1">Mitochondrion</location>
    </subcellularLocation>
</comment>
<comment type="PTM">
    <text evidence="1">4'-phosphopantetheine is transferred from CoA to a specific serine of apo-ACP by acpS. This modification is essential for activity because fatty acids are bound in thioester linkage to the sulfhydryl of the prosthetic group (By similarity).</text>
</comment>
<comment type="similarity">
    <text evidence="4">Belongs to the acyl carrier protein (ACP) family.</text>
</comment>
<comment type="caution">
    <text evidence="4">Was previously considered as a subunit of the NADH dehydrogenase of the mitochondrial respiratory chain complex I. Due to lack of 38 of the other 40 subunits that are present in that complex in mammals, this attribution is unlikely (PubMed:1518044).</text>
</comment>
<proteinExistence type="inferred from homology"/>
<accession>Q10217</accession>